<comment type="function">
    <text evidence="1">Catalyzes the decarboxylation of S-adenosylmethionine to S-adenosylmethioninamine (dcAdoMet), the propylamine donor required for the synthesis of the polyamines spermine and spermidine from the diamine putrescine.</text>
</comment>
<comment type="catalytic activity">
    <reaction evidence="1">
        <text>S-adenosyl-L-methionine + H(+) = S-adenosyl 3-(methylsulfanyl)propylamine + CO2</text>
        <dbReference type="Rhea" id="RHEA:15981"/>
        <dbReference type="ChEBI" id="CHEBI:15378"/>
        <dbReference type="ChEBI" id="CHEBI:16526"/>
        <dbReference type="ChEBI" id="CHEBI:57443"/>
        <dbReference type="ChEBI" id="CHEBI:59789"/>
        <dbReference type="EC" id="4.1.1.50"/>
    </reaction>
</comment>
<comment type="cofactor">
    <cofactor evidence="1">
        <name>pyruvate</name>
        <dbReference type="ChEBI" id="CHEBI:15361"/>
    </cofactor>
    <text evidence="1">Binds 1 pyruvoyl group covalently per subunit.</text>
</comment>
<comment type="pathway">
    <text evidence="1">Amine and polyamine biosynthesis; S-adenosylmethioninamine biosynthesis; S-adenosylmethioninamine from S-adenosyl-L-methionine: step 1/1.</text>
</comment>
<comment type="subunit">
    <text evidence="1">Heterooctamer of four alpha and four beta chains arranged as a tetramer of alpha/beta heterodimers.</text>
</comment>
<comment type="PTM">
    <text evidence="1">Is synthesized initially as an inactive proenzyme. Formation of the active enzyme involves a self-maturation process in which the active site pyruvoyl group is generated from an internal serine residue via an autocatalytic post-translational modification. Two non-identical subunits are generated from the proenzyme in this reaction, and the pyruvate is formed at the N-terminus of the alpha chain, which is derived from the carboxyl end of the proenzyme. The post-translation cleavage follows an unusual pathway, termed non-hydrolytic serinolysis, in which the side chain hydroxyl group of the serine supplies its oxygen atom to form the C-terminus of the beta chain, while the remainder of the serine residue undergoes an oxidative deamination to produce ammonia and the pyruvoyl group blocking the N-terminus of the alpha chain.</text>
</comment>
<comment type="similarity">
    <text evidence="1">Belongs to the prokaryotic AdoMetDC family. Type 2 subfamily.</text>
</comment>
<proteinExistence type="inferred from homology"/>
<organism>
    <name type="scientific">Clostridium perfringens (strain SM101 / Type A)</name>
    <dbReference type="NCBI Taxonomy" id="289380"/>
    <lineage>
        <taxon>Bacteria</taxon>
        <taxon>Bacillati</taxon>
        <taxon>Bacillota</taxon>
        <taxon>Clostridia</taxon>
        <taxon>Eubacteriales</taxon>
        <taxon>Clostridiaceae</taxon>
        <taxon>Clostridium</taxon>
    </lineage>
</organism>
<accession>Q0SVK9</accession>
<reference key="1">
    <citation type="journal article" date="2006" name="Genome Res.">
        <title>Skewed genomic variability in strains of the toxigenic bacterial pathogen, Clostridium perfringens.</title>
        <authorList>
            <person name="Myers G.S.A."/>
            <person name="Rasko D.A."/>
            <person name="Cheung J.K."/>
            <person name="Ravel J."/>
            <person name="Seshadri R."/>
            <person name="DeBoy R.T."/>
            <person name="Ren Q."/>
            <person name="Varga J."/>
            <person name="Awad M.M."/>
            <person name="Brinkac L.M."/>
            <person name="Daugherty S.C."/>
            <person name="Haft D.H."/>
            <person name="Dodson R.J."/>
            <person name="Madupu R."/>
            <person name="Nelson W.C."/>
            <person name="Rosovitz M.J."/>
            <person name="Sullivan S.A."/>
            <person name="Khouri H."/>
            <person name="Dimitrov G.I."/>
            <person name="Watkins K.L."/>
            <person name="Mulligan S."/>
            <person name="Benton J."/>
            <person name="Radune D."/>
            <person name="Fisher D.J."/>
            <person name="Atkins H.S."/>
            <person name="Hiscox T."/>
            <person name="Jost B.H."/>
            <person name="Billington S.J."/>
            <person name="Songer J.G."/>
            <person name="McClane B.A."/>
            <person name="Titball R.W."/>
            <person name="Rood J.I."/>
            <person name="Melville S.B."/>
            <person name="Paulsen I.T."/>
        </authorList>
    </citation>
    <scope>NUCLEOTIDE SEQUENCE [LARGE SCALE GENOMIC DNA]</scope>
    <source>
        <strain>SM101 / Type A</strain>
    </source>
</reference>
<protein>
    <recommendedName>
        <fullName evidence="1">S-adenosylmethionine decarboxylase proenzyme</fullName>
        <shortName evidence="1">AdoMetDC</shortName>
        <shortName evidence="1">SAMDC</shortName>
        <ecNumber evidence="1">4.1.1.50</ecNumber>
    </recommendedName>
    <component>
        <recommendedName>
            <fullName evidence="1">S-adenosylmethionine decarboxylase beta chain</fullName>
        </recommendedName>
    </component>
    <component>
        <recommendedName>
            <fullName evidence="1">S-adenosylmethionine decarboxylase alpha chain</fullName>
        </recommendedName>
    </component>
</protein>
<sequence length="271" mass="31352">MLGLKEKICLYGFNNLTKTLSFNIYDICYAKTEREKEDYIKYIDEQYNSERLTKILCDVTEMIGAHVLNISKQDYEPQGASVNVLITEEALPVALIDPSCNKGELSYLELRDSVVGHLDKSHLTVHTYPEFHPNNDIISFRVDIDVSTCGKISPLNALDYLIGSFDSDVITIDYRVRGFTRDVDGRKCYIDHDIKSIQDYIDEETLKKYDAMDVNVYQSNIFHTKMMLKDIGLNNYLFNSDPYELSPNDRREIRDRISKEMIEIYGGVNIY</sequence>
<gene>
    <name evidence="1" type="primary">speD</name>
    <name type="ordered locus">CPR_0513</name>
</gene>
<name>SPED_CLOPS</name>
<feature type="chain" id="PRO_0000364367" description="S-adenosylmethionine decarboxylase beta chain" evidence="1">
    <location>
        <begin position="1"/>
        <end position="120"/>
    </location>
</feature>
<feature type="chain" id="PRO_0000364368" description="S-adenosylmethionine decarboxylase alpha chain" evidence="1">
    <location>
        <begin position="121"/>
        <end position="271"/>
    </location>
</feature>
<feature type="active site" description="Schiff-base intermediate with substrate; via pyruvic acid" evidence="1">
    <location>
        <position position="121"/>
    </location>
</feature>
<feature type="active site" description="Proton acceptor; for processing activity" evidence="1">
    <location>
        <position position="126"/>
    </location>
</feature>
<feature type="active site" description="Proton donor; for catalytic activity" evidence="1">
    <location>
        <position position="149"/>
    </location>
</feature>
<feature type="site" description="Cleavage (non-hydrolytic); by autolysis" evidence="1">
    <location>
        <begin position="120"/>
        <end position="121"/>
    </location>
</feature>
<feature type="modified residue" description="Pyruvic acid (Ser); by autocatalysis" evidence="1">
    <location>
        <position position="121"/>
    </location>
</feature>
<evidence type="ECO:0000255" key="1">
    <source>
        <dbReference type="HAMAP-Rule" id="MF_00465"/>
    </source>
</evidence>
<keyword id="KW-0068">Autocatalytic cleavage</keyword>
<keyword id="KW-0210">Decarboxylase</keyword>
<keyword id="KW-0456">Lyase</keyword>
<keyword id="KW-0620">Polyamine biosynthesis</keyword>
<keyword id="KW-0670">Pyruvate</keyword>
<keyword id="KW-0949">S-adenosyl-L-methionine</keyword>
<keyword id="KW-0704">Schiff base</keyword>
<keyword id="KW-0745">Spermidine biosynthesis</keyword>
<keyword id="KW-0865">Zymogen</keyword>
<dbReference type="EC" id="4.1.1.50" evidence="1"/>
<dbReference type="EMBL" id="CP000312">
    <property type="protein sequence ID" value="ABG85383.1"/>
    <property type="molecule type" value="Genomic_DNA"/>
</dbReference>
<dbReference type="RefSeq" id="WP_011591612.1">
    <property type="nucleotide sequence ID" value="NC_008262.1"/>
</dbReference>
<dbReference type="KEGG" id="cpr:CPR_0513"/>
<dbReference type="UniPathway" id="UPA00331">
    <property type="reaction ID" value="UER00451"/>
</dbReference>
<dbReference type="Proteomes" id="UP000001824">
    <property type="component" value="Chromosome"/>
</dbReference>
<dbReference type="GO" id="GO:0005829">
    <property type="term" value="C:cytosol"/>
    <property type="evidence" value="ECO:0007669"/>
    <property type="project" value="TreeGrafter"/>
</dbReference>
<dbReference type="GO" id="GO:0004014">
    <property type="term" value="F:adenosylmethionine decarboxylase activity"/>
    <property type="evidence" value="ECO:0007669"/>
    <property type="project" value="UniProtKB-UniRule"/>
</dbReference>
<dbReference type="GO" id="GO:0008295">
    <property type="term" value="P:spermidine biosynthetic process"/>
    <property type="evidence" value="ECO:0007669"/>
    <property type="project" value="UniProtKB-UniRule"/>
</dbReference>
<dbReference type="Gene3D" id="3.60.90.10">
    <property type="entry name" value="S-adenosylmethionine decarboxylase"/>
    <property type="match status" value="1"/>
</dbReference>
<dbReference type="HAMAP" id="MF_00465">
    <property type="entry name" value="AdoMetDC_2"/>
    <property type="match status" value="1"/>
</dbReference>
<dbReference type="InterPro" id="IPR003826">
    <property type="entry name" value="AdoMetDC_fam_prok"/>
</dbReference>
<dbReference type="InterPro" id="IPR009165">
    <property type="entry name" value="S-AdoMet_deCO2ase_bac"/>
</dbReference>
<dbReference type="InterPro" id="IPR016067">
    <property type="entry name" value="S-AdoMet_deCO2ase_core"/>
</dbReference>
<dbReference type="NCBIfam" id="TIGR03331">
    <property type="entry name" value="SAM_DCase_Eco"/>
    <property type="match status" value="1"/>
</dbReference>
<dbReference type="PANTHER" id="PTHR33866">
    <property type="entry name" value="S-ADENOSYLMETHIONINE DECARBOXYLASE PROENZYME"/>
    <property type="match status" value="1"/>
</dbReference>
<dbReference type="PANTHER" id="PTHR33866:SF1">
    <property type="entry name" value="S-ADENOSYLMETHIONINE DECARBOXYLASE PROENZYME"/>
    <property type="match status" value="1"/>
</dbReference>
<dbReference type="Pfam" id="PF02675">
    <property type="entry name" value="AdoMet_dc"/>
    <property type="match status" value="1"/>
</dbReference>
<dbReference type="PIRSF" id="PIRSF001356">
    <property type="entry name" value="SAM_decarboxylas"/>
    <property type="match status" value="1"/>
</dbReference>
<dbReference type="SUPFAM" id="SSF56276">
    <property type="entry name" value="S-adenosylmethionine decarboxylase"/>
    <property type="match status" value="1"/>
</dbReference>